<evidence type="ECO:0000250" key="1"/>
<evidence type="ECO:0000256" key="2">
    <source>
        <dbReference type="SAM" id="MobiDB-lite"/>
    </source>
</evidence>
<evidence type="ECO:0000269" key="3">
    <source>
    </source>
</evidence>
<evidence type="ECO:0000269" key="4">
    <source>
    </source>
</evidence>
<evidence type="ECO:0000269" key="5">
    <source>
    </source>
</evidence>
<evidence type="ECO:0000269" key="6">
    <source>
    </source>
</evidence>
<evidence type="ECO:0000269" key="7">
    <source>
    </source>
</evidence>
<evidence type="ECO:0000305" key="8"/>
<proteinExistence type="evidence at protein level"/>
<reference key="1">
    <citation type="journal article" date="1997" name="DNA Res.">
        <title>Structural analysis of Arabidopsis thaliana chromosome 5. III. Sequence features of the regions of 1,191,918 bp covered by seventeen physically assigned P1 clones.</title>
        <authorList>
            <person name="Nakamura Y."/>
            <person name="Sato S."/>
            <person name="Kaneko T."/>
            <person name="Kotani H."/>
            <person name="Asamizu E."/>
            <person name="Miyajima N."/>
            <person name="Tabata S."/>
        </authorList>
    </citation>
    <scope>NUCLEOTIDE SEQUENCE [LARGE SCALE GENOMIC DNA]</scope>
    <source>
        <strain>cv. Columbia</strain>
    </source>
</reference>
<reference key="2">
    <citation type="journal article" date="2017" name="Plant J.">
        <title>Araport11: a complete reannotation of the Arabidopsis thaliana reference genome.</title>
        <authorList>
            <person name="Cheng C.Y."/>
            <person name="Krishnakumar V."/>
            <person name="Chan A.P."/>
            <person name="Thibaud-Nissen F."/>
            <person name="Schobel S."/>
            <person name="Town C.D."/>
        </authorList>
    </citation>
    <scope>GENOME REANNOTATION</scope>
    <source>
        <strain>cv. Columbia</strain>
    </source>
</reference>
<reference key="3">
    <citation type="submission" date="2006-06" db="EMBL/GenBank/DDBJ databases">
        <title>Arabidopsis ORF clones.</title>
        <authorList>
            <person name="Quinitio C."/>
            <person name="Chen H."/>
            <person name="Kim C.J."/>
            <person name="Shinn P."/>
            <person name="Ecker J.R."/>
        </authorList>
    </citation>
    <scope>NUCLEOTIDE SEQUENCE [LARGE SCALE MRNA]</scope>
    <source>
        <strain>cv. Columbia</strain>
    </source>
</reference>
<reference key="4">
    <citation type="submission" date="2002-03" db="EMBL/GenBank/DDBJ databases">
        <title>Full-length cDNA from Arabidopsis thaliana.</title>
        <authorList>
            <person name="Brover V.V."/>
            <person name="Troukhan M.E."/>
            <person name="Alexandrov N.A."/>
            <person name="Lu Y.-P."/>
            <person name="Flavell R.B."/>
            <person name="Feldmann K.A."/>
        </authorList>
    </citation>
    <scope>NUCLEOTIDE SEQUENCE [LARGE SCALE MRNA]</scope>
</reference>
<reference key="5">
    <citation type="journal article" date="2004" name="Plant Cell">
        <title>Arabidopsis WPP-domain proteins are developmentally associated with the nuclear envelope and promote cell division.</title>
        <authorList>
            <person name="Patel S."/>
            <person name="Rose A."/>
            <person name="Meulia T."/>
            <person name="Dixit R."/>
            <person name="Cyr R.J."/>
            <person name="Meier I."/>
        </authorList>
    </citation>
    <scope>FUNCTION</scope>
    <scope>MUTAGENESIS OF 45-W-P-46</scope>
    <scope>WPP DOMAIN</scope>
    <scope>TISSUE SPECIFICITY</scope>
    <scope>SUBCELLULAR LOCATION</scope>
</reference>
<reference key="6">
    <citation type="journal article" date="2005" name="Planta">
        <title>The plant nuclear envelope protein MAF1 has an additional location at the Golgi and binds to a novel Golgi-associated coiled-coil protein.</title>
        <authorList>
            <person name="Patel S."/>
            <person name="Brkljacic J."/>
            <person name="Gindullis F."/>
            <person name="Rose A."/>
            <person name="Meier I."/>
        </authorList>
    </citation>
    <scope>INTERACTION WITH WAP</scope>
</reference>
<reference key="7">
    <citation type="journal article" date="2007" name="Curr. Biol.">
        <title>Anchorage of plant RanGAP to the nuclear envelope involves novel nuclear-pore-associated proteins.</title>
        <authorList>
            <person name="Xu X.M."/>
            <person name="Meulia T."/>
            <person name="Meier I."/>
        </authorList>
    </citation>
    <scope>INTERACTION WITH WIP1; WIP2 AND WIP3</scope>
</reference>
<reference key="8">
    <citation type="journal article" date="2008" name="Plant Cell">
        <title>Two distinct interacting classes of nuclear envelope-associated coiled-coil proteins are required for the tissue-specific nuclear envelope targeting of Arabidopsis RanGAP.</title>
        <authorList>
            <person name="Zhao Q."/>
            <person name="Brkljacic J."/>
            <person name="Meier I."/>
        </authorList>
    </citation>
    <scope>INTERACTION WITH WIT1</scope>
</reference>
<reference key="9">
    <citation type="journal article" date="2009" name="Plant Physiol.">
        <title>WPP-domain proteins mimic the activity of the HSC70-1 chaperone in preventing mistargeting of RanGAP1-anchoring protein WIT1.</title>
        <authorList>
            <person name="Brkljacic J."/>
            <person name="Zhao Q."/>
            <person name="Meier I."/>
        </authorList>
    </citation>
    <scope>INTERACTION WITH WIT1; HSP70-1 AND HSP70-3</scope>
    <scope>FUNCTION</scope>
</reference>
<protein>
    <recommendedName>
        <fullName>WPP domain-containing protein 1</fullName>
    </recommendedName>
    <alternativeName>
        <fullName>MFP1 attachment factor 1</fullName>
    </alternativeName>
</protein>
<sequence length="155" mass="16634">MAETETESITTSSPPPISETENSTTLPTTETEKNPNPVTISLRIWPPTQKTRDAVINRLIETLSTESILSKRFGSLESEEASSVAKSIEDEAYAIASATVFGDDDGIEILKAYSKEISKRMLESVKAKSNVASPPPKDGDGIESAVDSKIDSSEA</sequence>
<comment type="function">
    <text evidence="3 7">Regulates the mitotic activity in roots. Plays a role with HSP70-1 in facilitating WIT1 nuclear envelope targeting.</text>
</comment>
<comment type="subunit">
    <text evidence="1 4 5 6 7">Binds to FPP proteins (By similarity). Interacts with WAP, WIP1, WIP2 and WIP3 through its WPP domain. Interacts with HSP70-1, HSP70-3 and WIT1. Component of a ternary complex composed of WPP1, HSP70-1 and WIT1.</text>
</comment>
<comment type="subcellular location">
    <subcellularLocation>
        <location evidence="3">Nucleus envelope</location>
    </subcellularLocation>
    <subcellularLocation>
        <location evidence="3">Cytoplasm</location>
    </subcellularLocation>
    <subcellularLocation>
        <location evidence="3">Nucleus</location>
    </subcellularLocation>
    <subcellularLocation>
        <location evidence="1">Golgi apparatus</location>
    </subcellularLocation>
    <subcellularLocation>
        <location evidence="1">Nucleus matrix</location>
    </subcellularLocation>
    <text evidence="1">Associated to the nuclear envelope (NE) in undifferentiated cells of the root tip. Associated with the outer NE and the nuclear pores in interphase cells and with the immature cell plate during cytokinesis. In differentiated cells, localized in both cytoplasm and nucleus. Accumulate in speckles of the cytoplasm belonging to the Golgi apparatus (By similarity). Appears at the NE as cells reenter the cell cycle during dedifferentiation.</text>
</comment>
<comment type="tissue specificity">
    <text evidence="3">Expressed in roots, stems and leaves.</text>
</comment>
<comment type="domain">
    <text>The WPP domain is required for the nuclear envelope localization.</text>
</comment>
<name>WPP1_ARATH</name>
<gene>
    <name type="primary">WPP1</name>
    <name type="synonym">MAF1</name>
    <name type="ordered locus">At5g43070</name>
    <name type="ORF">MMG4.9</name>
</gene>
<dbReference type="EMBL" id="AB008267">
    <property type="protein sequence ID" value="BAB08271.1"/>
    <property type="molecule type" value="Genomic_DNA"/>
</dbReference>
<dbReference type="EMBL" id="CP002688">
    <property type="protein sequence ID" value="AED94907.1"/>
    <property type="molecule type" value="Genomic_DNA"/>
</dbReference>
<dbReference type="EMBL" id="BT025708">
    <property type="protein sequence ID" value="ABF82611.1"/>
    <property type="molecule type" value="mRNA"/>
</dbReference>
<dbReference type="EMBL" id="AY088852">
    <property type="protein sequence ID" value="AAM67159.1"/>
    <property type="molecule type" value="mRNA"/>
</dbReference>
<dbReference type="RefSeq" id="NP_199121.1">
    <property type="nucleotide sequence ID" value="NM_123673.3"/>
</dbReference>
<dbReference type="SMR" id="Q9FMH6"/>
<dbReference type="BioGRID" id="19573">
    <property type="interactions" value="9"/>
</dbReference>
<dbReference type="FunCoup" id="Q9FMH6">
    <property type="interactions" value="312"/>
</dbReference>
<dbReference type="IntAct" id="Q9FMH6">
    <property type="interactions" value="3"/>
</dbReference>
<dbReference type="STRING" id="3702.Q9FMH6"/>
<dbReference type="iPTMnet" id="Q9FMH6"/>
<dbReference type="PaxDb" id="3702-AT5G43070.1"/>
<dbReference type="ProteomicsDB" id="242679"/>
<dbReference type="EnsemblPlants" id="AT5G43070.1">
    <property type="protein sequence ID" value="AT5G43070.1"/>
    <property type="gene ID" value="AT5G43070"/>
</dbReference>
<dbReference type="GeneID" id="834323"/>
<dbReference type="Gramene" id="AT5G43070.1">
    <property type="protein sequence ID" value="AT5G43070.1"/>
    <property type="gene ID" value="AT5G43070"/>
</dbReference>
<dbReference type="KEGG" id="ath:AT5G43070"/>
<dbReference type="Araport" id="AT5G43070"/>
<dbReference type="TAIR" id="AT5G43070">
    <property type="gene designation" value="WPP1"/>
</dbReference>
<dbReference type="eggNOG" id="ENOG502S3QB">
    <property type="taxonomic scope" value="Eukaryota"/>
</dbReference>
<dbReference type="HOGENOM" id="CLU_101563_1_0_1"/>
<dbReference type="InParanoid" id="Q9FMH6"/>
<dbReference type="OMA" id="HQESEMV"/>
<dbReference type="PhylomeDB" id="Q9FMH6"/>
<dbReference type="PRO" id="PR:Q9FMH6"/>
<dbReference type="Proteomes" id="UP000006548">
    <property type="component" value="Chromosome 5"/>
</dbReference>
<dbReference type="ExpressionAtlas" id="Q9FMH6">
    <property type="expression patterns" value="baseline and differential"/>
</dbReference>
<dbReference type="GO" id="GO:0005794">
    <property type="term" value="C:Golgi apparatus"/>
    <property type="evidence" value="ECO:0007669"/>
    <property type="project" value="UniProtKB-SubCell"/>
</dbReference>
<dbReference type="GO" id="GO:0016363">
    <property type="term" value="C:nuclear matrix"/>
    <property type="evidence" value="ECO:0007669"/>
    <property type="project" value="UniProtKB-SubCell"/>
</dbReference>
<dbReference type="GO" id="GO:0005640">
    <property type="term" value="C:nuclear outer membrane"/>
    <property type="evidence" value="ECO:0000314"/>
    <property type="project" value="TAIR"/>
</dbReference>
<dbReference type="GO" id="GO:0009536">
    <property type="term" value="C:plastid"/>
    <property type="evidence" value="ECO:0007005"/>
    <property type="project" value="TAIR"/>
</dbReference>
<dbReference type="GO" id="GO:0048527">
    <property type="term" value="P:lateral root development"/>
    <property type="evidence" value="ECO:0000315"/>
    <property type="project" value="TAIR"/>
</dbReference>
<dbReference type="GO" id="GO:0000278">
    <property type="term" value="P:mitotic cell cycle"/>
    <property type="evidence" value="ECO:0007669"/>
    <property type="project" value="InterPro"/>
</dbReference>
<dbReference type="Gene3D" id="1.10.246.200">
    <property type="entry name" value="WPP domain"/>
    <property type="match status" value="1"/>
</dbReference>
<dbReference type="InterPro" id="IPR044692">
    <property type="entry name" value="WPP1/2/3"/>
</dbReference>
<dbReference type="InterPro" id="IPR025265">
    <property type="entry name" value="WPP_dom"/>
</dbReference>
<dbReference type="InterPro" id="IPR038214">
    <property type="entry name" value="WPP_sf"/>
</dbReference>
<dbReference type="PANTHER" id="PTHR34362">
    <property type="entry name" value="WPP DOMAIN-CONTAINING PROTEIN 1-RELATED"/>
    <property type="match status" value="1"/>
</dbReference>
<dbReference type="PANTHER" id="PTHR34362:SF1">
    <property type="entry name" value="WPP DOMAIN-CONTAINING PROTEIN 1-RELATED"/>
    <property type="match status" value="1"/>
</dbReference>
<dbReference type="Pfam" id="PF13943">
    <property type="entry name" value="WPP"/>
    <property type="match status" value="1"/>
</dbReference>
<keyword id="KW-0963">Cytoplasm</keyword>
<keyword id="KW-0333">Golgi apparatus</keyword>
<keyword id="KW-0539">Nucleus</keyword>
<keyword id="KW-1185">Reference proteome</keyword>
<organism>
    <name type="scientific">Arabidopsis thaliana</name>
    <name type="common">Mouse-ear cress</name>
    <dbReference type="NCBI Taxonomy" id="3702"/>
    <lineage>
        <taxon>Eukaryota</taxon>
        <taxon>Viridiplantae</taxon>
        <taxon>Streptophyta</taxon>
        <taxon>Embryophyta</taxon>
        <taxon>Tracheophyta</taxon>
        <taxon>Spermatophyta</taxon>
        <taxon>Magnoliopsida</taxon>
        <taxon>eudicotyledons</taxon>
        <taxon>Gunneridae</taxon>
        <taxon>Pentapetalae</taxon>
        <taxon>rosids</taxon>
        <taxon>malvids</taxon>
        <taxon>Brassicales</taxon>
        <taxon>Brassicaceae</taxon>
        <taxon>Camelineae</taxon>
        <taxon>Arabidopsis</taxon>
    </lineage>
</organism>
<feature type="chain" id="PRO_0000347191" description="WPP domain-containing protein 1">
    <location>
        <begin position="1"/>
        <end position="155"/>
    </location>
</feature>
<feature type="region of interest" description="Disordered" evidence="2">
    <location>
        <begin position="1"/>
        <end position="41"/>
    </location>
</feature>
<feature type="region of interest" description="WPP">
    <location>
        <begin position="28"/>
        <end position="131"/>
    </location>
</feature>
<feature type="region of interest" description="Disordered" evidence="2">
    <location>
        <begin position="124"/>
        <end position="155"/>
    </location>
</feature>
<feature type="compositionally biased region" description="Low complexity" evidence="2">
    <location>
        <begin position="7"/>
        <end position="39"/>
    </location>
</feature>
<feature type="compositionally biased region" description="Basic and acidic residues" evidence="2">
    <location>
        <begin position="146"/>
        <end position="155"/>
    </location>
</feature>
<feature type="mutagenesis site" description="Loss of nuclear envelope localization." evidence="3">
    <original>WP</original>
    <variation>AA</variation>
    <location>
        <begin position="45"/>
        <end position="46"/>
    </location>
</feature>
<feature type="sequence conflict" description="In Ref. 4; AAM67159." evidence="8" ref="4">
    <original>T</original>
    <variation>I</variation>
    <location>
        <position position="20"/>
    </location>
</feature>
<feature type="sequence conflict" description="In Ref. 4; AAM67159." evidence="8" ref="4">
    <original>S</original>
    <variation>A</variation>
    <location>
        <position position="87"/>
    </location>
</feature>
<feature type="sequence conflict" description="In Ref. 4; AAM67159." evidence="8" ref="4">
    <original>D</original>
    <variation>E</variation>
    <location>
        <position position="90"/>
    </location>
</feature>
<feature type="sequence conflict" description="In Ref. 4; AAM67159." evidence="8" ref="4">
    <original>I</original>
    <variation>V</variation>
    <location>
        <position position="95"/>
    </location>
</feature>
<feature type="sequence conflict" description="In Ref. 4; AAM67159." evidence="8" ref="4">
    <original>S</original>
    <variation>N</variation>
    <location>
        <position position="129"/>
    </location>
</feature>
<accession>Q9FMH6</accession>
<accession>Q8L8R9</accession>